<evidence type="ECO:0000250" key="1"/>
<evidence type="ECO:0000255" key="2"/>
<evidence type="ECO:0000256" key="3">
    <source>
        <dbReference type="SAM" id="MobiDB-lite"/>
    </source>
</evidence>
<evidence type="ECO:0000305" key="4"/>
<comment type="function">
    <text evidence="1">Type IV dipeptidyl-peptidase which removes N-terminal dipeptides sequentially from polypeptides having unsubstituted N-termini provided that the penultimate residue is proline.</text>
</comment>
<comment type="catalytic activity">
    <reaction>
        <text>Release of an N-terminal dipeptide, Xaa-Yaa-|-Zaa-, from a polypeptide, preferentially when Yaa is Pro, provided Zaa is neither Pro nor hydroxyproline.</text>
        <dbReference type="EC" id="3.4.14.5"/>
    </reaction>
</comment>
<comment type="subcellular location">
    <subcellularLocation>
        <location evidence="1">Vacuole membrane</location>
        <topology evidence="1">Single-pass type II membrane protein</topology>
    </subcellularLocation>
    <text evidence="1">Lysosome-like vacuoles.</text>
</comment>
<comment type="similarity">
    <text evidence="4">Belongs to the peptidase S9B family.</text>
</comment>
<organism>
    <name type="scientific">Ajellomyces dermatitidis (strain ER-3 / ATCC MYA-2586)</name>
    <name type="common">Blastomyces dermatitidis</name>
    <dbReference type="NCBI Taxonomy" id="559297"/>
    <lineage>
        <taxon>Eukaryota</taxon>
        <taxon>Fungi</taxon>
        <taxon>Dikarya</taxon>
        <taxon>Ascomycota</taxon>
        <taxon>Pezizomycotina</taxon>
        <taxon>Eurotiomycetes</taxon>
        <taxon>Eurotiomycetidae</taxon>
        <taxon>Onygenales</taxon>
        <taxon>Ajellomycetaceae</taxon>
        <taxon>Blastomyces</taxon>
    </lineage>
</organism>
<dbReference type="EC" id="3.4.14.5"/>
<dbReference type="EMBL" id="EQ999983">
    <property type="protein sequence ID" value="EEQ85314.1"/>
    <property type="molecule type" value="Genomic_DNA"/>
</dbReference>
<dbReference type="SMR" id="C5GVF3"/>
<dbReference type="STRING" id="559297.C5GVF3"/>
<dbReference type="ESTHER" id="ajedr-dapb">
    <property type="family name" value="DPP4N_Peptidase_S9"/>
</dbReference>
<dbReference type="GlyCosmos" id="C5GVF3">
    <property type="glycosylation" value="6 sites, No reported glycans"/>
</dbReference>
<dbReference type="VEuPathDB" id="FungiDB:BDCG_08583"/>
<dbReference type="eggNOG" id="KOG2100">
    <property type="taxonomic scope" value="Eukaryota"/>
</dbReference>
<dbReference type="HOGENOM" id="CLU_006105_0_1_1"/>
<dbReference type="OMA" id="MRTPQEN"/>
<dbReference type="GO" id="GO:0000329">
    <property type="term" value="C:fungal-type vacuole membrane"/>
    <property type="evidence" value="ECO:0007669"/>
    <property type="project" value="EnsemblFungi"/>
</dbReference>
<dbReference type="GO" id="GO:0005886">
    <property type="term" value="C:plasma membrane"/>
    <property type="evidence" value="ECO:0007669"/>
    <property type="project" value="TreeGrafter"/>
</dbReference>
<dbReference type="GO" id="GO:0004177">
    <property type="term" value="F:aminopeptidase activity"/>
    <property type="evidence" value="ECO:0007669"/>
    <property type="project" value="UniProtKB-KW"/>
</dbReference>
<dbReference type="GO" id="GO:0008239">
    <property type="term" value="F:dipeptidyl-peptidase activity"/>
    <property type="evidence" value="ECO:0007669"/>
    <property type="project" value="UniProtKB-EC"/>
</dbReference>
<dbReference type="GO" id="GO:0008236">
    <property type="term" value="F:serine-type peptidase activity"/>
    <property type="evidence" value="ECO:0007669"/>
    <property type="project" value="UniProtKB-KW"/>
</dbReference>
<dbReference type="GO" id="GO:0006508">
    <property type="term" value="P:proteolysis"/>
    <property type="evidence" value="ECO:0007669"/>
    <property type="project" value="UniProtKB-KW"/>
</dbReference>
<dbReference type="FunFam" id="3.40.50.1820:FF:000003">
    <property type="entry name" value="Dipeptidyl peptidase 4"/>
    <property type="match status" value="1"/>
</dbReference>
<dbReference type="Gene3D" id="3.40.50.1820">
    <property type="entry name" value="alpha/beta hydrolase"/>
    <property type="match status" value="1"/>
</dbReference>
<dbReference type="Gene3D" id="2.140.10.30">
    <property type="entry name" value="Dipeptidylpeptidase IV, N-terminal domain"/>
    <property type="match status" value="1"/>
</dbReference>
<dbReference type="InterPro" id="IPR029058">
    <property type="entry name" value="AB_hydrolase_fold"/>
</dbReference>
<dbReference type="InterPro" id="IPR001375">
    <property type="entry name" value="Peptidase_S9_cat"/>
</dbReference>
<dbReference type="InterPro" id="IPR002469">
    <property type="entry name" value="Peptidase_S9B_N"/>
</dbReference>
<dbReference type="InterPro" id="IPR050278">
    <property type="entry name" value="Serine_Prot_S9B/DPPIV"/>
</dbReference>
<dbReference type="PANTHER" id="PTHR11731:SF200">
    <property type="entry name" value="DIPEPTIDYL PEPTIDASE 10, ISOFORM B"/>
    <property type="match status" value="1"/>
</dbReference>
<dbReference type="PANTHER" id="PTHR11731">
    <property type="entry name" value="PROTEASE FAMILY S9B,C DIPEPTIDYL-PEPTIDASE IV-RELATED"/>
    <property type="match status" value="1"/>
</dbReference>
<dbReference type="Pfam" id="PF00930">
    <property type="entry name" value="DPPIV_N"/>
    <property type="match status" value="1"/>
</dbReference>
<dbReference type="Pfam" id="PF00326">
    <property type="entry name" value="Peptidase_S9"/>
    <property type="match status" value="1"/>
</dbReference>
<dbReference type="SUPFAM" id="SSF53474">
    <property type="entry name" value="alpha/beta-Hydrolases"/>
    <property type="match status" value="1"/>
</dbReference>
<dbReference type="SUPFAM" id="SSF82171">
    <property type="entry name" value="DPP6 N-terminal domain-like"/>
    <property type="match status" value="1"/>
</dbReference>
<accession>C5GVF3</accession>
<name>DAPB_AJEDR</name>
<feature type="chain" id="PRO_0000412127" description="Probable dipeptidyl-aminopeptidase B">
    <location>
        <begin position="1"/>
        <end position="915"/>
    </location>
</feature>
<feature type="topological domain" description="Cytoplasmic" evidence="2">
    <location>
        <begin position="1"/>
        <end position="95"/>
    </location>
</feature>
<feature type="transmembrane region" description="Helical; Signal-anchor for type II membrane protein" evidence="2">
    <location>
        <begin position="96"/>
        <end position="116"/>
    </location>
</feature>
<feature type="topological domain" description="Vacuolar" evidence="2">
    <location>
        <begin position="117"/>
        <end position="915"/>
    </location>
</feature>
<feature type="region of interest" description="Disordered" evidence="3">
    <location>
        <begin position="1"/>
        <end position="20"/>
    </location>
</feature>
<feature type="region of interest" description="Disordered" evidence="3">
    <location>
        <begin position="52"/>
        <end position="74"/>
    </location>
</feature>
<feature type="compositionally biased region" description="Basic and acidic residues" evidence="3">
    <location>
        <begin position="55"/>
        <end position="72"/>
    </location>
</feature>
<feature type="active site" description="Charge relay system" evidence="1">
    <location>
        <position position="754"/>
    </location>
</feature>
<feature type="active site" description="Charge relay system" evidence="1">
    <location>
        <position position="831"/>
    </location>
</feature>
<feature type="active site" description="Charge relay system" evidence="1">
    <location>
        <position position="864"/>
    </location>
</feature>
<feature type="glycosylation site" description="N-linked (GlcNAc...) asparagine" evidence="2">
    <location>
        <position position="133"/>
    </location>
</feature>
<feature type="glycosylation site" description="N-linked (GlcNAc...) asparagine" evidence="2">
    <location>
        <position position="179"/>
    </location>
</feature>
<feature type="glycosylation site" description="N-linked (GlcNAc...) asparagine" evidence="2">
    <location>
        <position position="349"/>
    </location>
</feature>
<feature type="glycosylation site" description="N-linked (GlcNAc...) asparagine" evidence="2">
    <location>
        <position position="572"/>
    </location>
</feature>
<feature type="glycosylation site" description="N-linked (GlcNAc...) asparagine" evidence="2">
    <location>
        <position position="813"/>
    </location>
</feature>
<feature type="glycosylation site" description="N-linked (GlcNAc...) asparagine" evidence="2">
    <location>
        <position position="900"/>
    </location>
</feature>
<keyword id="KW-0031">Aminopeptidase</keyword>
<keyword id="KW-0325">Glycoprotein</keyword>
<keyword id="KW-0378">Hydrolase</keyword>
<keyword id="KW-0472">Membrane</keyword>
<keyword id="KW-0645">Protease</keyword>
<keyword id="KW-0720">Serine protease</keyword>
<keyword id="KW-0735">Signal-anchor</keyword>
<keyword id="KW-0812">Transmembrane</keyword>
<keyword id="KW-1133">Transmembrane helix</keyword>
<keyword id="KW-0926">Vacuole</keyword>
<gene>
    <name type="primary">DAPB</name>
    <name type="ORF">BDCG_08583</name>
</gene>
<reference key="1">
    <citation type="journal article" date="2015" name="PLoS Genet.">
        <title>The dynamic genome and transcriptome of the human fungal pathogen Blastomyces and close relative Emmonsia.</title>
        <authorList>
            <person name="Munoz J.F."/>
            <person name="Gauthier G.M."/>
            <person name="Desjardins C.A."/>
            <person name="Gallo J.E."/>
            <person name="Holder J."/>
            <person name="Sullivan T.D."/>
            <person name="Marty A.J."/>
            <person name="Carmen J.C."/>
            <person name="Chen Z."/>
            <person name="Ding L."/>
            <person name="Gujja S."/>
            <person name="Magrini V."/>
            <person name="Misas E."/>
            <person name="Mitreva M."/>
            <person name="Priest M."/>
            <person name="Saif S."/>
            <person name="Whiston E.A."/>
            <person name="Young S."/>
            <person name="Zeng Q."/>
            <person name="Goldman W.E."/>
            <person name="Mardis E.R."/>
            <person name="Taylor J.W."/>
            <person name="McEwen J.G."/>
            <person name="Clay O.K."/>
            <person name="Klein B.S."/>
            <person name="Cuomo C.A."/>
        </authorList>
    </citation>
    <scope>NUCLEOTIDE SEQUENCE [LARGE SCALE GENOMIC DNA]</scope>
    <source>
        <strain>ER-3 / ATCC MYA-2586</strain>
    </source>
</reference>
<protein>
    <recommendedName>
        <fullName>Probable dipeptidyl-aminopeptidase B</fullName>
        <shortName>DPAP B</shortName>
        <ecNumber>3.4.14.5</ecNumber>
    </recommendedName>
</protein>
<sequence length="915" mass="102912">MAGEKGGSRDEEREPLTRGSIEFRDSINSFDYSSSTASLSLAVIDRINGSTQDSRLGEKDQRDDDHDQYRNEEEYDVEDADYIPSGGKTVQKTTKIVLWALLFLCVGGWSLAFVIFLFRGHDTPQTSIASEENISSGGARGNRITLDEVLGGEWAPRAHSISWFPGPNGEDGLILEKDNLSATAYLRVEDIVGRKDPKASKKSIVLMQKKMFTVGRETVYSAQAWPSPDLKTVLVLSDQQKNWRHSFTGKYWLFDVETQTGQPLDPGAPDRRIQLASWSPQSDAVVFTRDNNMFLRKLTSNEVATITTDGGVDLFYGVPDWVYEEEVFSGNSATWWASDGDYIAFLRTNESSVPDYPIQYFASRPSGENPKPGEENYPEVREVKYPKAGAPNPIVDLQFYDVGKGEVFSVDVTSEFADDDRLIIEVLWASNGKALVRETNRESDILSIAIIDVLSRTGRIVRREDVNALDGGWVEPTQSTRFIPADPDHGRLDDGYIDTVIYEGRDQLAYFTPLDNPKPIMLTKGHSEVVNAPSGVDLKRGLVYFVVAGNEPWERHIYSVNFDGTSLQPLTNVTESSYYDVSFSNGAGYALLNYRGPKVPWQKVINTPANENSFEAIIEQNDHLSRKLRLFSLESKVYQHVTVDGFSLPVMERRPPNFDPAKKYPVLFHLYGGPGSQTVSKKFSVDFQSYVASTLGYIVVTVDGRGTGHIGRKARCIIRGNLGHYEARDQIETAKKWAAKPYVDESRMAIWGWSYGGFMTLKTLEQDGGRTFQYGMAVAPVTDWRYYDSIYTERYMRTPQHNQGGYDTSAISNTTALASNIRFLLMHGTADDNVHIQNSLTLLDKLDLDDVDNYDVHVFPDSDHSIYFHNAHKMVYNRLGDWLINAFNGEWLKVHKPTPNNSLFRRAETWGGLPV</sequence>
<proteinExistence type="inferred from homology"/>